<proteinExistence type="inferred from homology"/>
<gene>
    <name evidence="1" type="primary">mgrB</name>
    <name type="ordered locus">ECUMN_2119</name>
</gene>
<protein>
    <recommendedName>
        <fullName evidence="1">PhoP/PhoQ regulator MgrB</fullName>
    </recommendedName>
</protein>
<evidence type="ECO:0000255" key="1">
    <source>
        <dbReference type="HAMAP-Rule" id="MF_01596"/>
    </source>
</evidence>
<keyword id="KW-0997">Cell inner membrane</keyword>
<keyword id="KW-1003">Cell membrane</keyword>
<keyword id="KW-0472">Membrane</keyword>
<keyword id="KW-0812">Transmembrane</keyword>
<keyword id="KW-1133">Transmembrane helix</keyword>
<organism>
    <name type="scientific">Escherichia coli O17:K52:H18 (strain UMN026 / ExPEC)</name>
    <dbReference type="NCBI Taxonomy" id="585056"/>
    <lineage>
        <taxon>Bacteria</taxon>
        <taxon>Pseudomonadati</taxon>
        <taxon>Pseudomonadota</taxon>
        <taxon>Gammaproteobacteria</taxon>
        <taxon>Enterobacterales</taxon>
        <taxon>Enterobacteriaceae</taxon>
        <taxon>Escherichia</taxon>
    </lineage>
</organism>
<reference key="1">
    <citation type="journal article" date="2009" name="PLoS Genet.">
        <title>Organised genome dynamics in the Escherichia coli species results in highly diverse adaptive paths.</title>
        <authorList>
            <person name="Touchon M."/>
            <person name="Hoede C."/>
            <person name="Tenaillon O."/>
            <person name="Barbe V."/>
            <person name="Baeriswyl S."/>
            <person name="Bidet P."/>
            <person name="Bingen E."/>
            <person name="Bonacorsi S."/>
            <person name="Bouchier C."/>
            <person name="Bouvet O."/>
            <person name="Calteau A."/>
            <person name="Chiapello H."/>
            <person name="Clermont O."/>
            <person name="Cruveiller S."/>
            <person name="Danchin A."/>
            <person name="Diard M."/>
            <person name="Dossat C."/>
            <person name="Karoui M.E."/>
            <person name="Frapy E."/>
            <person name="Garry L."/>
            <person name="Ghigo J.M."/>
            <person name="Gilles A.M."/>
            <person name="Johnson J."/>
            <person name="Le Bouguenec C."/>
            <person name="Lescat M."/>
            <person name="Mangenot S."/>
            <person name="Martinez-Jehanne V."/>
            <person name="Matic I."/>
            <person name="Nassif X."/>
            <person name="Oztas S."/>
            <person name="Petit M.A."/>
            <person name="Pichon C."/>
            <person name="Rouy Z."/>
            <person name="Ruf C.S."/>
            <person name="Schneider D."/>
            <person name="Tourret J."/>
            <person name="Vacherie B."/>
            <person name="Vallenet D."/>
            <person name="Medigue C."/>
            <person name="Rocha E.P.C."/>
            <person name="Denamur E."/>
        </authorList>
    </citation>
    <scope>NUCLEOTIDE SEQUENCE [LARGE SCALE GENOMIC DNA]</scope>
    <source>
        <strain>UMN026 / ExPEC</strain>
    </source>
</reference>
<name>MGRB_ECOLU</name>
<feature type="chain" id="PRO_1000201567" description="PhoP/PhoQ regulator MgrB">
    <location>
        <begin position="1"/>
        <end position="47"/>
    </location>
</feature>
<feature type="transmembrane region" description="Helical" evidence="1">
    <location>
        <begin position="6"/>
        <end position="26"/>
    </location>
</feature>
<sequence length="47" mass="5552">MKKFRWVVLVVVVLACLLLWAQVFNMMCDQDVQFFSGICAINQFIPW</sequence>
<comment type="function">
    <text evidence="1">PhoP-regulated transcription is redox-sensitive, being activated when the periplasm becomes more reducing. MgrB acts between DsbA/DsbB and PhoP/PhoQ in this pathway. Represses PhoP/PhoQ signaling, possibly by binding to the periplasmic domain of PhoQ, altering its activity and that of downstream effector PhoP.</text>
</comment>
<comment type="subunit">
    <text evidence="1">May form homooligomers. Probably interacts with the periplasmic domain of PhoQ.</text>
</comment>
<comment type="subcellular location">
    <subcellularLocation>
        <location evidence="1">Cell inner membrane</location>
        <topology evidence="1">Single-pass membrane protein</topology>
    </subcellularLocation>
</comment>
<comment type="similarity">
    <text evidence="1">Belongs to the MgrB family.</text>
</comment>
<dbReference type="EMBL" id="CU928163">
    <property type="protein sequence ID" value="CAR13313.1"/>
    <property type="molecule type" value="Genomic_DNA"/>
</dbReference>
<dbReference type="RefSeq" id="WP_000714550.1">
    <property type="nucleotide sequence ID" value="NC_011751.1"/>
</dbReference>
<dbReference type="RefSeq" id="YP_002412844.1">
    <property type="nucleotide sequence ID" value="NC_011751.1"/>
</dbReference>
<dbReference type="SMR" id="B7NBH3"/>
<dbReference type="STRING" id="585056.ECUMN_2119"/>
<dbReference type="GeneID" id="93776075"/>
<dbReference type="KEGG" id="eum:ECUMN_2119"/>
<dbReference type="PATRIC" id="fig|585056.7.peg.2305"/>
<dbReference type="HOGENOM" id="CLU_208030_1_0_6"/>
<dbReference type="Proteomes" id="UP000007097">
    <property type="component" value="Chromosome"/>
</dbReference>
<dbReference type="GO" id="GO:0005886">
    <property type="term" value="C:plasma membrane"/>
    <property type="evidence" value="ECO:0007669"/>
    <property type="project" value="UniProtKB-SubCell"/>
</dbReference>
<dbReference type="GO" id="GO:0070298">
    <property type="term" value="P:negative regulation of phosphorelay signal transduction system"/>
    <property type="evidence" value="ECO:0007669"/>
    <property type="project" value="UniProtKB-UniRule"/>
</dbReference>
<dbReference type="HAMAP" id="MF_01596">
    <property type="entry name" value="MgrB"/>
    <property type="match status" value="1"/>
</dbReference>
<dbReference type="InterPro" id="IPR020907">
    <property type="entry name" value="MgrB"/>
</dbReference>
<dbReference type="NCBIfam" id="NF007635">
    <property type="entry name" value="PRK10299.1"/>
    <property type="match status" value="1"/>
</dbReference>
<dbReference type="Pfam" id="PF13998">
    <property type="entry name" value="MgrB"/>
    <property type="match status" value="1"/>
</dbReference>
<dbReference type="PROSITE" id="PS51257">
    <property type="entry name" value="PROKAR_LIPOPROTEIN"/>
    <property type="match status" value="1"/>
</dbReference>
<accession>B7NBH3</accession>